<evidence type="ECO:0000255" key="1">
    <source>
        <dbReference type="HAMAP-Rule" id="MF_00249"/>
    </source>
</evidence>
<name>HSLU_PSE14</name>
<proteinExistence type="inferred from homology"/>
<accession>Q48PI5</accession>
<keyword id="KW-0067">ATP-binding</keyword>
<keyword id="KW-0143">Chaperone</keyword>
<keyword id="KW-0963">Cytoplasm</keyword>
<keyword id="KW-0547">Nucleotide-binding</keyword>
<keyword id="KW-0346">Stress response</keyword>
<reference key="1">
    <citation type="journal article" date="2005" name="J. Bacteriol.">
        <title>Whole-genome sequence analysis of Pseudomonas syringae pv. phaseolicola 1448A reveals divergence among pathovars in genes involved in virulence and transposition.</title>
        <authorList>
            <person name="Joardar V."/>
            <person name="Lindeberg M."/>
            <person name="Jackson R.W."/>
            <person name="Selengut J."/>
            <person name="Dodson R."/>
            <person name="Brinkac L.M."/>
            <person name="Daugherty S.C."/>
            <person name="DeBoy R.T."/>
            <person name="Durkin A.S."/>
            <person name="Gwinn Giglio M."/>
            <person name="Madupu R."/>
            <person name="Nelson W.C."/>
            <person name="Rosovitz M.J."/>
            <person name="Sullivan S.A."/>
            <person name="Crabtree J."/>
            <person name="Creasy T."/>
            <person name="Davidsen T.M."/>
            <person name="Haft D.H."/>
            <person name="Zafar N."/>
            <person name="Zhou L."/>
            <person name="Halpin R."/>
            <person name="Holley T."/>
            <person name="Khouri H.M."/>
            <person name="Feldblyum T.V."/>
            <person name="White O."/>
            <person name="Fraser C.M."/>
            <person name="Chatterjee A.K."/>
            <person name="Cartinhour S."/>
            <person name="Schneider D."/>
            <person name="Mansfield J.W."/>
            <person name="Collmer A."/>
            <person name="Buell R."/>
        </authorList>
    </citation>
    <scope>NUCLEOTIDE SEQUENCE [LARGE SCALE GENOMIC DNA]</scope>
    <source>
        <strain>1448A / Race 6</strain>
    </source>
</reference>
<gene>
    <name evidence="1" type="primary">hslU</name>
    <name type="ordered locus">PSPPH_0381</name>
</gene>
<protein>
    <recommendedName>
        <fullName evidence="1">ATP-dependent protease ATPase subunit HslU</fullName>
    </recommendedName>
    <alternativeName>
        <fullName evidence="1">Unfoldase HslU</fullName>
    </alternativeName>
</protein>
<comment type="function">
    <text evidence="1">ATPase subunit of a proteasome-like degradation complex; this subunit has chaperone activity. The binding of ATP and its subsequent hydrolysis by HslU are essential for unfolding of protein substrates subsequently hydrolyzed by HslV. HslU recognizes the N-terminal part of its protein substrates and unfolds these before they are guided to HslV for hydrolysis.</text>
</comment>
<comment type="subunit">
    <text evidence="1">A double ring-shaped homohexamer of HslV is capped on each side by a ring-shaped HslU homohexamer. The assembly of the HslU/HslV complex is dependent on binding of ATP.</text>
</comment>
<comment type="subcellular location">
    <subcellularLocation>
        <location evidence="1">Cytoplasm</location>
    </subcellularLocation>
</comment>
<comment type="similarity">
    <text evidence="1">Belongs to the ClpX chaperone family. HslU subfamily.</text>
</comment>
<sequence>MSMTPREIVHELNRHIIGQDDAKRAVAIALRNRWRRMQLHEELRVEVTPKNILMIGPTGVGKTEIARRLAKLANAPFIKVEATKFTEVGYVGRDVESIIRDLADAAIKLLREQEIIKVRHRAEDAAEDRILDALLPPARVGFNEDPAQSNDSNTRQLFRKRLREGQLDDKEIEIEINEAVGVDISAPPGMEEMTNQLQSLFANMGKGKTKSRKLKVKDALKLVREEEAGRLVNDEELKAKALEAVEQHGIVFIDEIDKVAKRGNSGGVDVSREGVQRDLLPLIEGCTVNTKLGMVKTDHILFIASGAFHLSKPSDLVPELQGRLPIRVELKALSPQDFERILSEPHASLTEQYRELLKTEGLKIEFKPEGIKRLAEIAWQVNEKTENIGARRLHTLLERLLEEVSFSAGDLAISPDAAPIEIDAEYVNSHLGDLAENEDLSRYIL</sequence>
<dbReference type="EMBL" id="CP000058">
    <property type="protein sequence ID" value="AAZ35203.1"/>
    <property type="molecule type" value="Genomic_DNA"/>
</dbReference>
<dbReference type="RefSeq" id="WP_011167460.1">
    <property type="nucleotide sequence ID" value="NC_005773.3"/>
</dbReference>
<dbReference type="SMR" id="Q48PI5"/>
<dbReference type="KEGG" id="psp:PSPPH_0381"/>
<dbReference type="eggNOG" id="COG1220">
    <property type="taxonomic scope" value="Bacteria"/>
</dbReference>
<dbReference type="HOGENOM" id="CLU_033123_0_0_6"/>
<dbReference type="Proteomes" id="UP000000551">
    <property type="component" value="Chromosome"/>
</dbReference>
<dbReference type="GO" id="GO:0009376">
    <property type="term" value="C:HslUV protease complex"/>
    <property type="evidence" value="ECO:0007669"/>
    <property type="project" value="UniProtKB-UniRule"/>
</dbReference>
<dbReference type="GO" id="GO:0005524">
    <property type="term" value="F:ATP binding"/>
    <property type="evidence" value="ECO:0007669"/>
    <property type="project" value="UniProtKB-UniRule"/>
</dbReference>
<dbReference type="GO" id="GO:0016887">
    <property type="term" value="F:ATP hydrolysis activity"/>
    <property type="evidence" value="ECO:0007669"/>
    <property type="project" value="InterPro"/>
</dbReference>
<dbReference type="GO" id="GO:0008233">
    <property type="term" value="F:peptidase activity"/>
    <property type="evidence" value="ECO:0007669"/>
    <property type="project" value="InterPro"/>
</dbReference>
<dbReference type="GO" id="GO:0036402">
    <property type="term" value="F:proteasome-activating activity"/>
    <property type="evidence" value="ECO:0007669"/>
    <property type="project" value="UniProtKB-UniRule"/>
</dbReference>
<dbReference type="GO" id="GO:0043335">
    <property type="term" value="P:protein unfolding"/>
    <property type="evidence" value="ECO:0007669"/>
    <property type="project" value="UniProtKB-UniRule"/>
</dbReference>
<dbReference type="GO" id="GO:0051603">
    <property type="term" value="P:proteolysis involved in protein catabolic process"/>
    <property type="evidence" value="ECO:0007669"/>
    <property type="project" value="TreeGrafter"/>
</dbReference>
<dbReference type="CDD" id="cd19498">
    <property type="entry name" value="RecA-like_HslU"/>
    <property type="match status" value="1"/>
</dbReference>
<dbReference type="FunFam" id="1.10.8.10:FF:000028">
    <property type="entry name" value="ATP-dependent protease ATPase subunit HslU"/>
    <property type="match status" value="1"/>
</dbReference>
<dbReference type="FunFam" id="3.40.50.300:FF:000213">
    <property type="entry name" value="ATP-dependent protease ATPase subunit HslU"/>
    <property type="match status" value="1"/>
</dbReference>
<dbReference type="FunFam" id="3.40.50.300:FF:000220">
    <property type="entry name" value="ATP-dependent protease ATPase subunit HslU"/>
    <property type="match status" value="1"/>
</dbReference>
<dbReference type="Gene3D" id="1.10.8.60">
    <property type="match status" value="1"/>
</dbReference>
<dbReference type="Gene3D" id="1.10.8.10">
    <property type="entry name" value="DNA helicase RuvA subunit, C-terminal domain"/>
    <property type="match status" value="1"/>
</dbReference>
<dbReference type="Gene3D" id="3.40.50.300">
    <property type="entry name" value="P-loop containing nucleotide triphosphate hydrolases"/>
    <property type="match status" value="2"/>
</dbReference>
<dbReference type="HAMAP" id="MF_00249">
    <property type="entry name" value="HslU"/>
    <property type="match status" value="1"/>
</dbReference>
<dbReference type="InterPro" id="IPR003593">
    <property type="entry name" value="AAA+_ATPase"/>
</dbReference>
<dbReference type="InterPro" id="IPR050052">
    <property type="entry name" value="ATP-dep_Clp_protease_ClpX"/>
</dbReference>
<dbReference type="InterPro" id="IPR003959">
    <property type="entry name" value="ATPase_AAA_core"/>
</dbReference>
<dbReference type="InterPro" id="IPR019489">
    <property type="entry name" value="Clp_ATPase_C"/>
</dbReference>
<dbReference type="InterPro" id="IPR004491">
    <property type="entry name" value="HslU"/>
</dbReference>
<dbReference type="InterPro" id="IPR027417">
    <property type="entry name" value="P-loop_NTPase"/>
</dbReference>
<dbReference type="NCBIfam" id="TIGR00390">
    <property type="entry name" value="hslU"/>
    <property type="match status" value="1"/>
</dbReference>
<dbReference type="NCBIfam" id="NF003544">
    <property type="entry name" value="PRK05201.1"/>
    <property type="match status" value="1"/>
</dbReference>
<dbReference type="PANTHER" id="PTHR48102">
    <property type="entry name" value="ATP-DEPENDENT CLP PROTEASE ATP-BINDING SUBUNIT CLPX-LIKE, MITOCHONDRIAL-RELATED"/>
    <property type="match status" value="1"/>
</dbReference>
<dbReference type="PANTHER" id="PTHR48102:SF3">
    <property type="entry name" value="ATP-DEPENDENT PROTEASE ATPASE SUBUNIT HSLU"/>
    <property type="match status" value="1"/>
</dbReference>
<dbReference type="Pfam" id="PF00004">
    <property type="entry name" value="AAA"/>
    <property type="match status" value="1"/>
</dbReference>
<dbReference type="Pfam" id="PF07724">
    <property type="entry name" value="AAA_2"/>
    <property type="match status" value="1"/>
</dbReference>
<dbReference type="SMART" id="SM00382">
    <property type="entry name" value="AAA"/>
    <property type="match status" value="1"/>
</dbReference>
<dbReference type="SMART" id="SM01086">
    <property type="entry name" value="ClpB_D2-small"/>
    <property type="match status" value="1"/>
</dbReference>
<dbReference type="SUPFAM" id="SSF52540">
    <property type="entry name" value="P-loop containing nucleoside triphosphate hydrolases"/>
    <property type="match status" value="1"/>
</dbReference>
<organism>
    <name type="scientific">Pseudomonas savastanoi pv. phaseolicola (strain 1448A / Race 6)</name>
    <name type="common">Pseudomonas syringae pv. phaseolicola (strain 1448A / Race 6)</name>
    <dbReference type="NCBI Taxonomy" id="264730"/>
    <lineage>
        <taxon>Bacteria</taxon>
        <taxon>Pseudomonadati</taxon>
        <taxon>Pseudomonadota</taxon>
        <taxon>Gammaproteobacteria</taxon>
        <taxon>Pseudomonadales</taxon>
        <taxon>Pseudomonadaceae</taxon>
        <taxon>Pseudomonas</taxon>
    </lineage>
</organism>
<feature type="chain" id="PRO_1000012769" description="ATP-dependent protease ATPase subunit HslU">
    <location>
        <begin position="1"/>
        <end position="445"/>
    </location>
</feature>
<feature type="binding site" evidence="1">
    <location>
        <position position="17"/>
    </location>
    <ligand>
        <name>ATP</name>
        <dbReference type="ChEBI" id="CHEBI:30616"/>
    </ligand>
</feature>
<feature type="binding site" evidence="1">
    <location>
        <begin position="59"/>
        <end position="64"/>
    </location>
    <ligand>
        <name>ATP</name>
        <dbReference type="ChEBI" id="CHEBI:30616"/>
    </ligand>
</feature>
<feature type="binding site" evidence="1">
    <location>
        <position position="254"/>
    </location>
    <ligand>
        <name>ATP</name>
        <dbReference type="ChEBI" id="CHEBI:30616"/>
    </ligand>
</feature>
<feature type="binding site" evidence="1">
    <location>
        <position position="319"/>
    </location>
    <ligand>
        <name>ATP</name>
        <dbReference type="ChEBI" id="CHEBI:30616"/>
    </ligand>
</feature>
<feature type="binding site" evidence="1">
    <location>
        <position position="391"/>
    </location>
    <ligand>
        <name>ATP</name>
        <dbReference type="ChEBI" id="CHEBI:30616"/>
    </ligand>
</feature>